<evidence type="ECO:0000255" key="1">
    <source>
        <dbReference type="HAMAP-Rule" id="MF_00050"/>
    </source>
</evidence>
<keyword id="KW-0963">Cytoplasm</keyword>
<keyword id="KW-0251">Elongation factor</keyword>
<keyword id="KW-0648">Protein biosynthesis</keyword>
<keyword id="KW-1185">Reference proteome</keyword>
<gene>
    <name evidence="1" type="primary">tsf</name>
    <name type="ordered locus">MCA0568</name>
</gene>
<proteinExistence type="inferred from homology"/>
<protein>
    <recommendedName>
        <fullName evidence="1">Elongation factor Ts</fullName>
        <shortName evidence="1">EF-Ts</shortName>
    </recommendedName>
</protein>
<accession>Q60BA9</accession>
<reference key="1">
    <citation type="journal article" date="2004" name="PLoS Biol.">
        <title>Genomic insights into methanotrophy: the complete genome sequence of Methylococcus capsulatus (Bath).</title>
        <authorList>
            <person name="Ward N.L."/>
            <person name="Larsen O."/>
            <person name="Sakwa J."/>
            <person name="Bruseth L."/>
            <person name="Khouri H.M."/>
            <person name="Durkin A.S."/>
            <person name="Dimitrov G."/>
            <person name="Jiang L."/>
            <person name="Scanlan D."/>
            <person name="Kang K.H."/>
            <person name="Lewis M.R."/>
            <person name="Nelson K.E."/>
            <person name="Methe B.A."/>
            <person name="Wu M."/>
            <person name="Heidelberg J.F."/>
            <person name="Paulsen I.T."/>
            <person name="Fouts D.E."/>
            <person name="Ravel J."/>
            <person name="Tettelin H."/>
            <person name="Ren Q."/>
            <person name="Read T.D."/>
            <person name="DeBoy R.T."/>
            <person name="Seshadri R."/>
            <person name="Salzberg S.L."/>
            <person name="Jensen H.B."/>
            <person name="Birkeland N.K."/>
            <person name="Nelson W.C."/>
            <person name="Dodson R.J."/>
            <person name="Grindhaug S.H."/>
            <person name="Holt I.E."/>
            <person name="Eidhammer I."/>
            <person name="Jonasen I."/>
            <person name="Vanaken S."/>
            <person name="Utterback T.R."/>
            <person name="Feldblyum T.V."/>
            <person name="Fraser C.M."/>
            <person name="Lillehaug J.R."/>
            <person name="Eisen J.A."/>
        </authorList>
    </citation>
    <scope>NUCLEOTIDE SEQUENCE [LARGE SCALE GENOMIC DNA]</scope>
    <source>
        <strain>ATCC 33009 / NCIMB 11132 / Bath</strain>
    </source>
</reference>
<organism>
    <name type="scientific">Methylococcus capsulatus (strain ATCC 33009 / NCIMB 11132 / Bath)</name>
    <dbReference type="NCBI Taxonomy" id="243233"/>
    <lineage>
        <taxon>Bacteria</taxon>
        <taxon>Pseudomonadati</taxon>
        <taxon>Pseudomonadota</taxon>
        <taxon>Gammaproteobacteria</taxon>
        <taxon>Methylococcales</taxon>
        <taxon>Methylococcaceae</taxon>
        <taxon>Methylococcus</taxon>
    </lineage>
</organism>
<sequence length="293" mass="31310">MSITAGMVKELRERTGSGMMECKKALTETGGDLEAAVELMRKQGLAKADKKSGRTAAEGRICARVSEDGKAAAIVEVNCETDFVAKGDDFVKFADDVAAVALASSAMTVEELLAGEMRAGATVDQVRREMIAKIGENINVRRFERLSSQDGRIASYLHGTRIGVLVELVGGDAELGKDIAMHIAASKPLCCDEKGVPAEVIAKEKEIFSAQAQASGKPANIVEKMVEGRIGKFLGEITLVGQPFVKDPDQTVGKLLQSKGASVVRFVRFEVGEGIEKEETNFAEEVMAQVRAS</sequence>
<comment type="function">
    <text evidence="1">Associates with the EF-Tu.GDP complex and induces the exchange of GDP to GTP. It remains bound to the aminoacyl-tRNA.EF-Tu.GTP complex up to the GTP hydrolysis stage on the ribosome.</text>
</comment>
<comment type="subcellular location">
    <subcellularLocation>
        <location evidence="1">Cytoplasm</location>
    </subcellularLocation>
</comment>
<comment type="similarity">
    <text evidence="1">Belongs to the EF-Ts family.</text>
</comment>
<feature type="chain" id="PRO_0000161148" description="Elongation factor Ts">
    <location>
        <begin position="1"/>
        <end position="293"/>
    </location>
</feature>
<feature type="region of interest" description="Involved in Mg(2+) ion dislocation from EF-Tu" evidence="1">
    <location>
        <begin position="81"/>
        <end position="84"/>
    </location>
</feature>
<dbReference type="EMBL" id="AE017282">
    <property type="protein sequence ID" value="AAU93242.1"/>
    <property type="molecule type" value="Genomic_DNA"/>
</dbReference>
<dbReference type="RefSeq" id="WP_010959916.1">
    <property type="nucleotide sequence ID" value="NC_002977.6"/>
</dbReference>
<dbReference type="SMR" id="Q60BA9"/>
<dbReference type="STRING" id="243233.MCA0568"/>
<dbReference type="GeneID" id="88222900"/>
<dbReference type="KEGG" id="mca:MCA0568"/>
<dbReference type="eggNOG" id="COG0264">
    <property type="taxonomic scope" value="Bacteria"/>
</dbReference>
<dbReference type="HOGENOM" id="CLU_047155_0_2_6"/>
<dbReference type="Proteomes" id="UP000006821">
    <property type="component" value="Chromosome"/>
</dbReference>
<dbReference type="GO" id="GO:0005737">
    <property type="term" value="C:cytoplasm"/>
    <property type="evidence" value="ECO:0007669"/>
    <property type="project" value="UniProtKB-SubCell"/>
</dbReference>
<dbReference type="GO" id="GO:0003746">
    <property type="term" value="F:translation elongation factor activity"/>
    <property type="evidence" value="ECO:0007669"/>
    <property type="project" value="UniProtKB-UniRule"/>
</dbReference>
<dbReference type="CDD" id="cd14275">
    <property type="entry name" value="UBA_EF-Ts"/>
    <property type="match status" value="1"/>
</dbReference>
<dbReference type="FunFam" id="1.10.286.20:FF:000001">
    <property type="entry name" value="Elongation factor Ts"/>
    <property type="match status" value="1"/>
</dbReference>
<dbReference type="FunFam" id="1.10.8.10:FF:000001">
    <property type="entry name" value="Elongation factor Ts"/>
    <property type="match status" value="1"/>
</dbReference>
<dbReference type="Gene3D" id="1.10.286.20">
    <property type="match status" value="1"/>
</dbReference>
<dbReference type="Gene3D" id="1.10.8.10">
    <property type="entry name" value="DNA helicase RuvA subunit, C-terminal domain"/>
    <property type="match status" value="1"/>
</dbReference>
<dbReference type="Gene3D" id="3.30.479.20">
    <property type="entry name" value="Elongation factor Ts, dimerisation domain"/>
    <property type="match status" value="2"/>
</dbReference>
<dbReference type="HAMAP" id="MF_00050">
    <property type="entry name" value="EF_Ts"/>
    <property type="match status" value="1"/>
</dbReference>
<dbReference type="InterPro" id="IPR036402">
    <property type="entry name" value="EF-Ts_dimer_sf"/>
</dbReference>
<dbReference type="InterPro" id="IPR001816">
    <property type="entry name" value="Transl_elong_EFTs/EF1B"/>
</dbReference>
<dbReference type="InterPro" id="IPR014039">
    <property type="entry name" value="Transl_elong_EFTs/EF1B_dimer"/>
</dbReference>
<dbReference type="InterPro" id="IPR018101">
    <property type="entry name" value="Transl_elong_Ts_CS"/>
</dbReference>
<dbReference type="InterPro" id="IPR009060">
    <property type="entry name" value="UBA-like_sf"/>
</dbReference>
<dbReference type="NCBIfam" id="TIGR00116">
    <property type="entry name" value="tsf"/>
    <property type="match status" value="1"/>
</dbReference>
<dbReference type="PANTHER" id="PTHR11741">
    <property type="entry name" value="ELONGATION FACTOR TS"/>
    <property type="match status" value="1"/>
</dbReference>
<dbReference type="PANTHER" id="PTHR11741:SF0">
    <property type="entry name" value="ELONGATION FACTOR TS, MITOCHONDRIAL"/>
    <property type="match status" value="1"/>
</dbReference>
<dbReference type="Pfam" id="PF00889">
    <property type="entry name" value="EF_TS"/>
    <property type="match status" value="1"/>
</dbReference>
<dbReference type="SUPFAM" id="SSF54713">
    <property type="entry name" value="Elongation factor Ts (EF-Ts), dimerisation domain"/>
    <property type="match status" value="2"/>
</dbReference>
<dbReference type="SUPFAM" id="SSF46934">
    <property type="entry name" value="UBA-like"/>
    <property type="match status" value="1"/>
</dbReference>
<dbReference type="PROSITE" id="PS01126">
    <property type="entry name" value="EF_TS_1"/>
    <property type="match status" value="1"/>
</dbReference>
<dbReference type="PROSITE" id="PS01127">
    <property type="entry name" value="EF_TS_2"/>
    <property type="match status" value="1"/>
</dbReference>
<name>EFTS_METCA</name>